<proteinExistence type="inferred from homology"/>
<reference key="1">
    <citation type="journal article" date="2002" name="Proc. Natl. Acad. Sci. U.S.A.">
        <title>The genome sequence of Bifidobacterium longum reflects its adaptation to the human gastrointestinal tract.</title>
        <authorList>
            <person name="Schell M.A."/>
            <person name="Karmirantzou M."/>
            <person name="Snel B."/>
            <person name="Vilanova D."/>
            <person name="Berger B."/>
            <person name="Pessi G."/>
            <person name="Zwahlen M.-C."/>
            <person name="Desiere F."/>
            <person name="Bork P."/>
            <person name="Delley M."/>
            <person name="Pridmore R.D."/>
            <person name="Arigoni F."/>
        </authorList>
    </citation>
    <scope>NUCLEOTIDE SEQUENCE [LARGE SCALE GENOMIC DNA]</scope>
    <source>
        <strain>NCC 2705</strain>
    </source>
</reference>
<feature type="chain" id="PRO_0000131221" description="Large ribosomal subunit protein uL18">
    <location>
        <begin position="1"/>
        <end position="123"/>
    </location>
</feature>
<organism>
    <name type="scientific">Bifidobacterium longum (strain NCC 2705)</name>
    <dbReference type="NCBI Taxonomy" id="206672"/>
    <lineage>
        <taxon>Bacteria</taxon>
        <taxon>Bacillati</taxon>
        <taxon>Actinomycetota</taxon>
        <taxon>Actinomycetes</taxon>
        <taxon>Bifidobacteriales</taxon>
        <taxon>Bifidobacteriaceae</taxon>
        <taxon>Bifidobacterium</taxon>
    </lineage>
</organism>
<name>RL18_BIFLO</name>
<accession>Q8G402</accession>
<protein>
    <recommendedName>
        <fullName evidence="1">Large ribosomal subunit protein uL18</fullName>
    </recommendedName>
    <alternativeName>
        <fullName evidence="2">50S ribosomal protein L18</fullName>
    </alternativeName>
</protein>
<dbReference type="EMBL" id="AE014295">
    <property type="protein sequence ID" value="AAN25385.1"/>
    <property type="molecule type" value="Genomic_DNA"/>
</dbReference>
<dbReference type="RefSeq" id="NP_696749.1">
    <property type="nucleotide sequence ID" value="NC_004307.2"/>
</dbReference>
<dbReference type="RefSeq" id="WP_007053041.1">
    <property type="nucleotide sequence ID" value="NC_004307.2"/>
</dbReference>
<dbReference type="SMR" id="Q8G402"/>
<dbReference type="STRING" id="206672.BL1596"/>
<dbReference type="EnsemblBacteria" id="AAN25385">
    <property type="protein sequence ID" value="AAN25385"/>
    <property type="gene ID" value="BL1596"/>
</dbReference>
<dbReference type="GeneID" id="69578881"/>
<dbReference type="KEGG" id="blo:BL1596"/>
<dbReference type="PATRIC" id="fig|206672.9.peg.1651"/>
<dbReference type="HOGENOM" id="CLU_098841_0_1_11"/>
<dbReference type="OrthoDB" id="9810939at2"/>
<dbReference type="PhylomeDB" id="Q8G402"/>
<dbReference type="Proteomes" id="UP000000439">
    <property type="component" value="Chromosome"/>
</dbReference>
<dbReference type="GO" id="GO:0022625">
    <property type="term" value="C:cytosolic large ribosomal subunit"/>
    <property type="evidence" value="ECO:0007669"/>
    <property type="project" value="TreeGrafter"/>
</dbReference>
<dbReference type="GO" id="GO:0008097">
    <property type="term" value="F:5S rRNA binding"/>
    <property type="evidence" value="ECO:0007669"/>
    <property type="project" value="TreeGrafter"/>
</dbReference>
<dbReference type="GO" id="GO:0003735">
    <property type="term" value="F:structural constituent of ribosome"/>
    <property type="evidence" value="ECO:0007669"/>
    <property type="project" value="InterPro"/>
</dbReference>
<dbReference type="GO" id="GO:0006412">
    <property type="term" value="P:translation"/>
    <property type="evidence" value="ECO:0007669"/>
    <property type="project" value="UniProtKB-UniRule"/>
</dbReference>
<dbReference type="CDD" id="cd00432">
    <property type="entry name" value="Ribosomal_L18_L5e"/>
    <property type="match status" value="1"/>
</dbReference>
<dbReference type="FunFam" id="3.30.420.100:FF:000001">
    <property type="entry name" value="50S ribosomal protein L18"/>
    <property type="match status" value="1"/>
</dbReference>
<dbReference type="Gene3D" id="3.30.420.100">
    <property type="match status" value="1"/>
</dbReference>
<dbReference type="HAMAP" id="MF_01337_B">
    <property type="entry name" value="Ribosomal_uL18_B"/>
    <property type="match status" value="1"/>
</dbReference>
<dbReference type="InterPro" id="IPR004389">
    <property type="entry name" value="Ribosomal_uL18_bac-type"/>
</dbReference>
<dbReference type="InterPro" id="IPR005484">
    <property type="entry name" value="Ribosomal_uL18_bac/euk"/>
</dbReference>
<dbReference type="NCBIfam" id="TIGR00060">
    <property type="entry name" value="L18_bact"/>
    <property type="match status" value="1"/>
</dbReference>
<dbReference type="PANTHER" id="PTHR12899">
    <property type="entry name" value="39S RIBOSOMAL PROTEIN L18, MITOCHONDRIAL"/>
    <property type="match status" value="1"/>
</dbReference>
<dbReference type="PANTHER" id="PTHR12899:SF3">
    <property type="entry name" value="LARGE RIBOSOMAL SUBUNIT PROTEIN UL18M"/>
    <property type="match status" value="1"/>
</dbReference>
<dbReference type="Pfam" id="PF00861">
    <property type="entry name" value="Ribosomal_L18p"/>
    <property type="match status" value="1"/>
</dbReference>
<dbReference type="SUPFAM" id="SSF53137">
    <property type="entry name" value="Translational machinery components"/>
    <property type="match status" value="1"/>
</dbReference>
<gene>
    <name evidence="1" type="primary">rplR</name>
    <name type="ordered locus">BL1596</name>
</gene>
<comment type="function">
    <text evidence="1">This is one of the proteins that bind and probably mediate the attachment of the 5S RNA into the large ribosomal subunit, where it forms part of the central protuberance.</text>
</comment>
<comment type="subunit">
    <text evidence="1">Part of the 50S ribosomal subunit; part of the 5S rRNA/L5/L18/L25 subcomplex. Contacts the 5S and 23S rRNAs.</text>
</comment>
<comment type="similarity">
    <text evidence="1">Belongs to the universal ribosomal protein uL18 family.</text>
</comment>
<sequence length="123" mass="12968">MSVAILGKGKKVALKRRHARIRKRISGTPERPRLVVTRSNRHMVAQVVDDTKGITLVSASTLQADFAGFEGTKTEAAKKVGELIAEKAKAAGITAVVFDRGGNKYTGRVAAVADGAREGGLAL</sequence>
<evidence type="ECO:0000255" key="1">
    <source>
        <dbReference type="HAMAP-Rule" id="MF_01337"/>
    </source>
</evidence>
<evidence type="ECO:0000305" key="2"/>
<keyword id="KW-1185">Reference proteome</keyword>
<keyword id="KW-0687">Ribonucleoprotein</keyword>
<keyword id="KW-0689">Ribosomal protein</keyword>
<keyword id="KW-0694">RNA-binding</keyword>
<keyword id="KW-0699">rRNA-binding</keyword>